<evidence type="ECO:0000255" key="1">
    <source>
        <dbReference type="HAMAP-Rule" id="MF_00147"/>
    </source>
</evidence>
<name>TPIS_RALN1</name>
<keyword id="KW-0963">Cytoplasm</keyword>
<keyword id="KW-0312">Gluconeogenesis</keyword>
<keyword id="KW-0324">Glycolysis</keyword>
<keyword id="KW-0413">Isomerase</keyword>
<keyword id="KW-1185">Reference proteome</keyword>
<gene>
    <name evidence="1" type="primary">tpiA</name>
    <name type="ordered locus">RSc2064</name>
    <name type="ORF">RS03629</name>
</gene>
<sequence>MSARPKLVVGNWKLHGSLNGNAELLEKIKAAGQTRAALAVCAPFPYLAQCQSVLAGSSVAWGAQDVSAETRGAFTGEVAASMLSEFGCGYAIVGHSERRTYHGETDAQVAIKALRALEHGITPIVCVGETLAQREAGETELVVARQLEAVLESLSVEQLGHIVVAYEPVWAIGTGKTATSEQAQAVHAFLRGRVAACDAGVAQRMPILYGGSVKPDNAAELFTMADIDGGLIGGASLKAEDFLAIGRA</sequence>
<accession>Q8XXP9</accession>
<reference key="1">
    <citation type="journal article" date="2002" name="Nature">
        <title>Genome sequence of the plant pathogen Ralstonia solanacearum.</title>
        <authorList>
            <person name="Salanoubat M."/>
            <person name="Genin S."/>
            <person name="Artiguenave F."/>
            <person name="Gouzy J."/>
            <person name="Mangenot S."/>
            <person name="Arlat M."/>
            <person name="Billault A."/>
            <person name="Brottier P."/>
            <person name="Camus J.-C."/>
            <person name="Cattolico L."/>
            <person name="Chandler M."/>
            <person name="Choisne N."/>
            <person name="Claudel-Renard C."/>
            <person name="Cunnac S."/>
            <person name="Demange N."/>
            <person name="Gaspin C."/>
            <person name="Lavie M."/>
            <person name="Moisan A."/>
            <person name="Robert C."/>
            <person name="Saurin W."/>
            <person name="Schiex T."/>
            <person name="Siguier P."/>
            <person name="Thebault P."/>
            <person name="Whalen M."/>
            <person name="Wincker P."/>
            <person name="Levy M."/>
            <person name="Weissenbach J."/>
            <person name="Boucher C.A."/>
        </authorList>
    </citation>
    <scope>NUCLEOTIDE SEQUENCE [LARGE SCALE GENOMIC DNA]</scope>
    <source>
        <strain>ATCC BAA-1114 / GMI1000</strain>
    </source>
</reference>
<protein>
    <recommendedName>
        <fullName evidence="1">Triosephosphate isomerase</fullName>
        <shortName evidence="1">TIM</shortName>
        <shortName evidence="1">TPI</shortName>
        <ecNumber evidence="1">5.3.1.1</ecNumber>
    </recommendedName>
    <alternativeName>
        <fullName evidence="1">Triose-phosphate isomerase</fullName>
    </alternativeName>
</protein>
<feature type="chain" id="PRO_0000090272" description="Triosephosphate isomerase">
    <location>
        <begin position="1"/>
        <end position="248"/>
    </location>
</feature>
<feature type="active site" description="Electrophile" evidence="1">
    <location>
        <position position="95"/>
    </location>
</feature>
<feature type="active site" description="Proton acceptor" evidence="1">
    <location>
        <position position="167"/>
    </location>
</feature>
<feature type="binding site" evidence="1">
    <location>
        <begin position="11"/>
        <end position="13"/>
    </location>
    <ligand>
        <name>substrate</name>
    </ligand>
</feature>
<feature type="binding site" evidence="1">
    <location>
        <position position="173"/>
    </location>
    <ligand>
        <name>substrate</name>
    </ligand>
</feature>
<feature type="binding site" evidence="1">
    <location>
        <position position="212"/>
    </location>
    <ligand>
        <name>substrate</name>
    </ligand>
</feature>
<feature type="binding site" evidence="1">
    <location>
        <begin position="233"/>
        <end position="234"/>
    </location>
    <ligand>
        <name>substrate</name>
    </ligand>
</feature>
<organism>
    <name type="scientific">Ralstonia nicotianae (strain ATCC BAA-1114 / GMI1000)</name>
    <name type="common">Ralstonia solanacearum</name>
    <dbReference type="NCBI Taxonomy" id="267608"/>
    <lineage>
        <taxon>Bacteria</taxon>
        <taxon>Pseudomonadati</taxon>
        <taxon>Pseudomonadota</taxon>
        <taxon>Betaproteobacteria</taxon>
        <taxon>Burkholderiales</taxon>
        <taxon>Burkholderiaceae</taxon>
        <taxon>Ralstonia</taxon>
        <taxon>Ralstonia solanacearum species complex</taxon>
    </lineage>
</organism>
<comment type="function">
    <text evidence="1">Involved in the gluconeogenesis. Catalyzes stereospecifically the conversion of dihydroxyacetone phosphate (DHAP) to D-glyceraldehyde-3-phosphate (G3P).</text>
</comment>
<comment type="catalytic activity">
    <reaction evidence="1">
        <text>D-glyceraldehyde 3-phosphate = dihydroxyacetone phosphate</text>
        <dbReference type="Rhea" id="RHEA:18585"/>
        <dbReference type="ChEBI" id="CHEBI:57642"/>
        <dbReference type="ChEBI" id="CHEBI:59776"/>
        <dbReference type="EC" id="5.3.1.1"/>
    </reaction>
</comment>
<comment type="pathway">
    <text evidence="1">Carbohydrate biosynthesis; gluconeogenesis.</text>
</comment>
<comment type="pathway">
    <text evidence="1">Carbohydrate degradation; glycolysis; D-glyceraldehyde 3-phosphate from glycerone phosphate: step 1/1.</text>
</comment>
<comment type="subunit">
    <text evidence="1">Homodimer.</text>
</comment>
<comment type="subcellular location">
    <subcellularLocation>
        <location evidence="1">Cytoplasm</location>
    </subcellularLocation>
</comment>
<comment type="similarity">
    <text evidence="1">Belongs to the triosephosphate isomerase family.</text>
</comment>
<dbReference type="EC" id="5.3.1.1" evidence="1"/>
<dbReference type="EMBL" id="AL646052">
    <property type="protein sequence ID" value="CAD15771.1"/>
    <property type="molecule type" value="Genomic_DNA"/>
</dbReference>
<dbReference type="RefSeq" id="WP_011001996.1">
    <property type="nucleotide sequence ID" value="NC_003295.1"/>
</dbReference>
<dbReference type="SMR" id="Q8XXP9"/>
<dbReference type="STRING" id="267608.RSc2064"/>
<dbReference type="EnsemblBacteria" id="CAD15771">
    <property type="protein sequence ID" value="CAD15771"/>
    <property type="gene ID" value="RSc2064"/>
</dbReference>
<dbReference type="KEGG" id="rso:RSc2064"/>
<dbReference type="PATRIC" id="fig|267608.8.peg.2097"/>
<dbReference type="eggNOG" id="COG0149">
    <property type="taxonomic scope" value="Bacteria"/>
</dbReference>
<dbReference type="HOGENOM" id="CLU_024251_2_1_4"/>
<dbReference type="UniPathway" id="UPA00109">
    <property type="reaction ID" value="UER00189"/>
</dbReference>
<dbReference type="UniPathway" id="UPA00138"/>
<dbReference type="Proteomes" id="UP000001436">
    <property type="component" value="Chromosome"/>
</dbReference>
<dbReference type="GO" id="GO:0005829">
    <property type="term" value="C:cytosol"/>
    <property type="evidence" value="ECO:0007669"/>
    <property type="project" value="TreeGrafter"/>
</dbReference>
<dbReference type="GO" id="GO:0004807">
    <property type="term" value="F:triose-phosphate isomerase activity"/>
    <property type="evidence" value="ECO:0007669"/>
    <property type="project" value="UniProtKB-UniRule"/>
</dbReference>
<dbReference type="GO" id="GO:0006094">
    <property type="term" value="P:gluconeogenesis"/>
    <property type="evidence" value="ECO:0007669"/>
    <property type="project" value="UniProtKB-UniRule"/>
</dbReference>
<dbReference type="GO" id="GO:0046166">
    <property type="term" value="P:glyceraldehyde-3-phosphate biosynthetic process"/>
    <property type="evidence" value="ECO:0007669"/>
    <property type="project" value="TreeGrafter"/>
</dbReference>
<dbReference type="GO" id="GO:0019563">
    <property type="term" value="P:glycerol catabolic process"/>
    <property type="evidence" value="ECO:0007669"/>
    <property type="project" value="TreeGrafter"/>
</dbReference>
<dbReference type="GO" id="GO:0006096">
    <property type="term" value="P:glycolytic process"/>
    <property type="evidence" value="ECO:0007669"/>
    <property type="project" value="UniProtKB-UniRule"/>
</dbReference>
<dbReference type="CDD" id="cd00311">
    <property type="entry name" value="TIM"/>
    <property type="match status" value="1"/>
</dbReference>
<dbReference type="FunFam" id="3.20.20.70:FF:000016">
    <property type="entry name" value="Triosephosphate isomerase"/>
    <property type="match status" value="1"/>
</dbReference>
<dbReference type="Gene3D" id="3.20.20.70">
    <property type="entry name" value="Aldolase class I"/>
    <property type="match status" value="1"/>
</dbReference>
<dbReference type="HAMAP" id="MF_00147_B">
    <property type="entry name" value="TIM_B"/>
    <property type="match status" value="1"/>
</dbReference>
<dbReference type="InterPro" id="IPR013785">
    <property type="entry name" value="Aldolase_TIM"/>
</dbReference>
<dbReference type="InterPro" id="IPR035990">
    <property type="entry name" value="TIM_sf"/>
</dbReference>
<dbReference type="InterPro" id="IPR022896">
    <property type="entry name" value="TrioseP_Isoase_bac/euk"/>
</dbReference>
<dbReference type="InterPro" id="IPR000652">
    <property type="entry name" value="Triosephosphate_isomerase"/>
</dbReference>
<dbReference type="InterPro" id="IPR020861">
    <property type="entry name" value="Triosephosphate_isomerase_AS"/>
</dbReference>
<dbReference type="NCBIfam" id="TIGR00419">
    <property type="entry name" value="tim"/>
    <property type="match status" value="1"/>
</dbReference>
<dbReference type="PANTHER" id="PTHR21139">
    <property type="entry name" value="TRIOSEPHOSPHATE ISOMERASE"/>
    <property type="match status" value="1"/>
</dbReference>
<dbReference type="PANTHER" id="PTHR21139:SF42">
    <property type="entry name" value="TRIOSEPHOSPHATE ISOMERASE"/>
    <property type="match status" value="1"/>
</dbReference>
<dbReference type="Pfam" id="PF00121">
    <property type="entry name" value="TIM"/>
    <property type="match status" value="1"/>
</dbReference>
<dbReference type="SUPFAM" id="SSF51351">
    <property type="entry name" value="Triosephosphate isomerase (TIM)"/>
    <property type="match status" value="1"/>
</dbReference>
<dbReference type="PROSITE" id="PS00171">
    <property type="entry name" value="TIM_1"/>
    <property type="match status" value="1"/>
</dbReference>
<dbReference type="PROSITE" id="PS51440">
    <property type="entry name" value="TIM_2"/>
    <property type="match status" value="1"/>
</dbReference>
<proteinExistence type="inferred from homology"/>